<organism>
    <name type="scientific">Acinetobacter baylyi (strain ATCC 33305 / BD413 / ADP1)</name>
    <dbReference type="NCBI Taxonomy" id="62977"/>
    <lineage>
        <taxon>Bacteria</taxon>
        <taxon>Pseudomonadati</taxon>
        <taxon>Pseudomonadota</taxon>
        <taxon>Gammaproteobacteria</taxon>
        <taxon>Moraxellales</taxon>
        <taxon>Moraxellaceae</taxon>
        <taxon>Acinetobacter</taxon>
    </lineage>
</organism>
<accession>Q59094</accession>
<dbReference type="EC" id="1.15.1.1"/>
<dbReference type="EMBL" id="Z46863">
    <property type="protein sequence ID" value="CAA86923.1"/>
    <property type="molecule type" value="Genomic_DNA"/>
</dbReference>
<dbReference type="EMBL" id="CR543861">
    <property type="protein sequence ID" value="CAG67957.1"/>
    <property type="molecule type" value="Genomic_DNA"/>
</dbReference>
<dbReference type="PIR" id="JC6320">
    <property type="entry name" value="JC6320"/>
</dbReference>
<dbReference type="RefSeq" id="WP_004921627.1">
    <property type="nucleotide sequence ID" value="NC_005966.1"/>
</dbReference>
<dbReference type="SMR" id="Q59094"/>
<dbReference type="STRING" id="202950.GCA_001485005_01296"/>
<dbReference type="GeneID" id="45233511"/>
<dbReference type="KEGG" id="aci:ACIAD1070"/>
<dbReference type="eggNOG" id="COG0605">
    <property type="taxonomic scope" value="Bacteria"/>
</dbReference>
<dbReference type="HOGENOM" id="CLU_031625_0_1_6"/>
<dbReference type="OrthoDB" id="9803125at2"/>
<dbReference type="BioCyc" id="ASP62977:ACIAD_RS04930-MONOMER"/>
<dbReference type="Proteomes" id="UP000000430">
    <property type="component" value="Chromosome"/>
</dbReference>
<dbReference type="GO" id="GO:0005737">
    <property type="term" value="C:cytoplasm"/>
    <property type="evidence" value="ECO:0007669"/>
    <property type="project" value="TreeGrafter"/>
</dbReference>
<dbReference type="GO" id="GO:0042597">
    <property type="term" value="C:periplasmic space"/>
    <property type="evidence" value="ECO:0007669"/>
    <property type="project" value="UniProtKB-SubCell"/>
</dbReference>
<dbReference type="GO" id="GO:0046872">
    <property type="term" value="F:metal ion binding"/>
    <property type="evidence" value="ECO:0007669"/>
    <property type="project" value="UniProtKB-KW"/>
</dbReference>
<dbReference type="GO" id="GO:0004784">
    <property type="term" value="F:superoxide dismutase activity"/>
    <property type="evidence" value="ECO:0007669"/>
    <property type="project" value="UniProtKB-EC"/>
</dbReference>
<dbReference type="FunFam" id="1.10.287.990:FF:000001">
    <property type="entry name" value="Superoxide dismutase"/>
    <property type="match status" value="1"/>
</dbReference>
<dbReference type="FunFam" id="3.55.40.20:FF:000001">
    <property type="entry name" value="Superoxide dismutase"/>
    <property type="match status" value="1"/>
</dbReference>
<dbReference type="Gene3D" id="1.10.287.990">
    <property type="entry name" value="Fe,Mn superoxide dismutase (SOD) domain"/>
    <property type="match status" value="1"/>
</dbReference>
<dbReference type="Gene3D" id="3.55.40.20">
    <property type="entry name" value="Iron/manganese superoxide dismutase, C-terminal domain"/>
    <property type="match status" value="1"/>
</dbReference>
<dbReference type="InterPro" id="IPR001189">
    <property type="entry name" value="Mn/Fe_SOD"/>
</dbReference>
<dbReference type="InterPro" id="IPR019833">
    <property type="entry name" value="Mn/Fe_SOD_BS"/>
</dbReference>
<dbReference type="InterPro" id="IPR019832">
    <property type="entry name" value="Mn/Fe_SOD_C"/>
</dbReference>
<dbReference type="InterPro" id="IPR019831">
    <property type="entry name" value="Mn/Fe_SOD_N"/>
</dbReference>
<dbReference type="InterPro" id="IPR036324">
    <property type="entry name" value="Mn/Fe_SOD_N_sf"/>
</dbReference>
<dbReference type="InterPro" id="IPR036314">
    <property type="entry name" value="SOD_C_sf"/>
</dbReference>
<dbReference type="PANTHER" id="PTHR43595">
    <property type="entry name" value="37S RIBOSOMAL PROTEIN S26, MITOCHONDRIAL"/>
    <property type="match status" value="1"/>
</dbReference>
<dbReference type="PANTHER" id="PTHR43595:SF2">
    <property type="entry name" value="SMALL RIBOSOMAL SUBUNIT PROTEIN MS42"/>
    <property type="match status" value="1"/>
</dbReference>
<dbReference type="Pfam" id="PF02777">
    <property type="entry name" value="Sod_Fe_C"/>
    <property type="match status" value="1"/>
</dbReference>
<dbReference type="Pfam" id="PF00081">
    <property type="entry name" value="Sod_Fe_N"/>
    <property type="match status" value="1"/>
</dbReference>
<dbReference type="PIRSF" id="PIRSF000349">
    <property type="entry name" value="SODismutase"/>
    <property type="match status" value="1"/>
</dbReference>
<dbReference type="PRINTS" id="PR01703">
    <property type="entry name" value="MNSODISMTASE"/>
</dbReference>
<dbReference type="SUPFAM" id="SSF54719">
    <property type="entry name" value="Fe,Mn superoxide dismutase (SOD), C-terminal domain"/>
    <property type="match status" value="1"/>
</dbReference>
<dbReference type="SUPFAM" id="SSF46609">
    <property type="entry name" value="Fe,Mn superoxide dismutase (SOD), N-terminal domain"/>
    <property type="match status" value="1"/>
</dbReference>
<dbReference type="PROSITE" id="PS00088">
    <property type="entry name" value="SOD_MN"/>
    <property type="match status" value="1"/>
</dbReference>
<reference key="1">
    <citation type="journal article" date="1997" name="Gene">
        <title>Nucleotide sequence of a putative periplasmic Mn superoxide dismutase from Acinetobacter calcoaceticus ADP1.</title>
        <authorList>
            <person name="Geissdoerfer W."/>
            <person name="Ratajczak A."/>
            <person name="Hillen W."/>
        </authorList>
    </citation>
    <scope>NUCLEOTIDE SEQUENCE [GENOMIC DNA]</scope>
</reference>
<reference key="2">
    <citation type="journal article" date="2004" name="Nucleic Acids Res.">
        <title>Unique features revealed by the genome sequence of Acinetobacter sp. ADP1, a versatile and naturally transformation competent bacterium.</title>
        <authorList>
            <person name="Barbe V."/>
            <person name="Vallenet D."/>
            <person name="Fonknechten N."/>
            <person name="Kreimeyer A."/>
            <person name="Oztas S."/>
            <person name="Labarre L."/>
            <person name="Cruveiller S."/>
            <person name="Robert C."/>
            <person name="Duprat S."/>
            <person name="Wincker P."/>
            <person name="Ornston L.N."/>
            <person name="Weissenbach J."/>
            <person name="Marliere P."/>
            <person name="Cohen G.N."/>
            <person name="Medigue C."/>
        </authorList>
    </citation>
    <scope>NUCLEOTIDE SEQUENCE [LARGE SCALE GENOMIC DNA]</scope>
    <source>
        <strain>ATCC 33305 / BD413 / ADP1</strain>
    </source>
</reference>
<feature type="signal peptide" evidence="2">
    <location>
        <begin position="1"/>
        <end position="23"/>
    </location>
</feature>
<feature type="chain" id="PRO_0000032903" description="Superoxide dismutase [Mn]">
    <location>
        <begin position="24"/>
        <end position="228"/>
    </location>
</feature>
<feature type="binding site" evidence="1">
    <location>
        <position position="49"/>
    </location>
    <ligand>
        <name>Mn(2+)</name>
        <dbReference type="ChEBI" id="CHEBI:29035"/>
    </ligand>
</feature>
<feature type="binding site" evidence="1">
    <location>
        <position position="100"/>
    </location>
    <ligand>
        <name>Mn(2+)</name>
        <dbReference type="ChEBI" id="CHEBI:29035"/>
    </ligand>
</feature>
<feature type="binding site" evidence="1">
    <location>
        <position position="188"/>
    </location>
    <ligand>
        <name>Mn(2+)</name>
        <dbReference type="ChEBI" id="CHEBI:29035"/>
    </ligand>
</feature>
<feature type="binding site" evidence="1">
    <location>
        <position position="192"/>
    </location>
    <ligand>
        <name>Mn(2+)</name>
        <dbReference type="ChEBI" id="CHEBI:29035"/>
    </ligand>
</feature>
<keyword id="KW-0464">Manganese</keyword>
<keyword id="KW-0479">Metal-binding</keyword>
<keyword id="KW-0560">Oxidoreductase</keyword>
<keyword id="KW-0574">Periplasm</keyword>
<keyword id="KW-0732">Signal</keyword>
<evidence type="ECO:0000250" key="1"/>
<evidence type="ECO:0000255" key="2"/>
<evidence type="ECO:0000305" key="3"/>
<proteinExistence type="inferred from homology"/>
<sequence length="228" mass="25741">MTRSLKTTLILLASSVISMSALAEFKQAPLPYATNALQPAIDQQTMEIHYGKHHKAYVDNLNAQIKTYPELDKTDLIQLQKQISKYNTAVRNNGGGHFNHTFFWESLAATNKTGQPSPALVKQITQDFGSLDAFKQKFNEAASGRFGSGWAWLIVTPNGKLAVTSTPNQDNPLMDLSETKGTPLLGLDVWEHAYYLKYQNRRADYIKAFWSVVNWNKVNERYNEAIKK</sequence>
<gene>
    <name type="primary">sodA</name>
    <name type="synonym">sodM</name>
    <name type="ordered locus">ACIAD1070</name>
</gene>
<protein>
    <recommendedName>
        <fullName>Superoxide dismutase [Mn]</fullName>
        <ecNumber>1.15.1.1</ecNumber>
    </recommendedName>
</protein>
<name>SODM_ACIAD</name>
<comment type="function">
    <text>Destroys superoxide anion radicals which are normally produced within the cells and which are toxic to biological systems.</text>
</comment>
<comment type="catalytic activity">
    <reaction>
        <text>2 superoxide + 2 H(+) = H2O2 + O2</text>
        <dbReference type="Rhea" id="RHEA:20696"/>
        <dbReference type="ChEBI" id="CHEBI:15378"/>
        <dbReference type="ChEBI" id="CHEBI:15379"/>
        <dbReference type="ChEBI" id="CHEBI:16240"/>
        <dbReference type="ChEBI" id="CHEBI:18421"/>
        <dbReference type="EC" id="1.15.1.1"/>
    </reaction>
</comment>
<comment type="cofactor">
    <cofactor evidence="1">
        <name>Mn(2+)</name>
        <dbReference type="ChEBI" id="CHEBI:29035"/>
    </cofactor>
    <text evidence="1">Binds 1 Mn(2+) ion per subunit.</text>
</comment>
<comment type="subcellular location">
    <subcellularLocation>
        <location evidence="3">Periplasm</location>
    </subcellularLocation>
</comment>
<comment type="similarity">
    <text evidence="3">Belongs to the iron/manganese superoxide dismutase family.</text>
</comment>